<dbReference type="EC" id="3.5.1.108" evidence="1"/>
<dbReference type="EMBL" id="CP000851">
    <property type="protein sequence ID" value="ABV89116.1"/>
    <property type="molecule type" value="Genomic_DNA"/>
</dbReference>
<dbReference type="RefSeq" id="WP_012156998.1">
    <property type="nucleotide sequence ID" value="NC_009901.1"/>
</dbReference>
<dbReference type="SMR" id="A8H979"/>
<dbReference type="STRING" id="398579.Spea_3806"/>
<dbReference type="KEGG" id="spl:Spea_3806"/>
<dbReference type="eggNOG" id="COG0774">
    <property type="taxonomic scope" value="Bacteria"/>
</dbReference>
<dbReference type="HOGENOM" id="CLU_046528_1_0_6"/>
<dbReference type="OrthoDB" id="9802746at2"/>
<dbReference type="UniPathway" id="UPA00359">
    <property type="reaction ID" value="UER00478"/>
</dbReference>
<dbReference type="Proteomes" id="UP000002608">
    <property type="component" value="Chromosome"/>
</dbReference>
<dbReference type="GO" id="GO:0016020">
    <property type="term" value="C:membrane"/>
    <property type="evidence" value="ECO:0007669"/>
    <property type="project" value="GOC"/>
</dbReference>
<dbReference type="GO" id="GO:0046872">
    <property type="term" value="F:metal ion binding"/>
    <property type="evidence" value="ECO:0007669"/>
    <property type="project" value="UniProtKB-KW"/>
</dbReference>
<dbReference type="GO" id="GO:0103117">
    <property type="term" value="F:UDP-3-O-acyl-N-acetylglucosamine deacetylase activity"/>
    <property type="evidence" value="ECO:0007669"/>
    <property type="project" value="UniProtKB-UniRule"/>
</dbReference>
<dbReference type="GO" id="GO:0009245">
    <property type="term" value="P:lipid A biosynthetic process"/>
    <property type="evidence" value="ECO:0007669"/>
    <property type="project" value="UniProtKB-UniRule"/>
</dbReference>
<dbReference type="Gene3D" id="3.30.230.20">
    <property type="entry name" value="lpxc deacetylase, domain 1"/>
    <property type="match status" value="1"/>
</dbReference>
<dbReference type="Gene3D" id="3.30.1700.10">
    <property type="entry name" value="lpxc deacetylase, domain 2"/>
    <property type="match status" value="1"/>
</dbReference>
<dbReference type="HAMAP" id="MF_00388">
    <property type="entry name" value="LpxC"/>
    <property type="match status" value="1"/>
</dbReference>
<dbReference type="InterPro" id="IPR020568">
    <property type="entry name" value="Ribosomal_Su5_D2-typ_SF"/>
</dbReference>
<dbReference type="InterPro" id="IPR004463">
    <property type="entry name" value="UDP-acyl_GlcNac_deAcase"/>
</dbReference>
<dbReference type="InterPro" id="IPR011334">
    <property type="entry name" value="UDP-acyl_GlcNac_deAcase_C"/>
</dbReference>
<dbReference type="InterPro" id="IPR015870">
    <property type="entry name" value="UDP-acyl_N-AcGlcN_deAcase_N"/>
</dbReference>
<dbReference type="NCBIfam" id="TIGR00325">
    <property type="entry name" value="lpxC"/>
    <property type="match status" value="1"/>
</dbReference>
<dbReference type="PANTHER" id="PTHR33694">
    <property type="entry name" value="UDP-3-O-ACYL-N-ACETYLGLUCOSAMINE DEACETYLASE 1, MITOCHONDRIAL-RELATED"/>
    <property type="match status" value="1"/>
</dbReference>
<dbReference type="PANTHER" id="PTHR33694:SF1">
    <property type="entry name" value="UDP-3-O-ACYL-N-ACETYLGLUCOSAMINE DEACETYLASE 1, MITOCHONDRIAL-RELATED"/>
    <property type="match status" value="1"/>
</dbReference>
<dbReference type="Pfam" id="PF03331">
    <property type="entry name" value="LpxC"/>
    <property type="match status" value="1"/>
</dbReference>
<dbReference type="SUPFAM" id="SSF54211">
    <property type="entry name" value="Ribosomal protein S5 domain 2-like"/>
    <property type="match status" value="2"/>
</dbReference>
<keyword id="KW-0378">Hydrolase</keyword>
<keyword id="KW-0441">Lipid A biosynthesis</keyword>
<keyword id="KW-0444">Lipid biosynthesis</keyword>
<keyword id="KW-0443">Lipid metabolism</keyword>
<keyword id="KW-0479">Metal-binding</keyword>
<keyword id="KW-1185">Reference proteome</keyword>
<keyword id="KW-0862">Zinc</keyword>
<sequence>MIFQRTVKEMVKTTGVGLHSGNKVTLIIKPAPVNTGIKLVRTDLSPAVEIPAVADQVRETTMCTALVNDDGVRISTIEHLFAALAGLGIDNAVIEVDAPEIPIMDGSASPFVFLLQSVGIQEQNAAKKYIKITKPIRVEDGDKWAELKPFKGFRVDFAIDFNHPEIARSQQHMVMDFSSSAFIKDISRARTFGFMRDIEYLRANNLALGGSMENAVVLDEYRVLNPDGLRYEDEFVKHKILDAFGDLYVAGHAIVGEFCAYKTGHALNNQLVRAMLAQQDAWEIVSFEKEADAPVSFSVPAGAVFA</sequence>
<proteinExistence type="inferred from homology"/>
<comment type="function">
    <text evidence="1">Catalyzes the hydrolysis of UDP-3-O-myristoyl-N-acetylglucosamine to form UDP-3-O-myristoylglucosamine and acetate, the committed step in lipid A biosynthesis.</text>
</comment>
<comment type="catalytic activity">
    <reaction evidence="1">
        <text>a UDP-3-O-[(3R)-3-hydroxyacyl]-N-acetyl-alpha-D-glucosamine + H2O = a UDP-3-O-[(3R)-3-hydroxyacyl]-alpha-D-glucosamine + acetate</text>
        <dbReference type="Rhea" id="RHEA:67816"/>
        <dbReference type="ChEBI" id="CHEBI:15377"/>
        <dbReference type="ChEBI" id="CHEBI:30089"/>
        <dbReference type="ChEBI" id="CHEBI:137740"/>
        <dbReference type="ChEBI" id="CHEBI:173225"/>
        <dbReference type="EC" id="3.5.1.108"/>
    </reaction>
</comment>
<comment type="cofactor">
    <cofactor evidence="1">
        <name>Zn(2+)</name>
        <dbReference type="ChEBI" id="CHEBI:29105"/>
    </cofactor>
</comment>
<comment type="pathway">
    <text evidence="1">Glycolipid biosynthesis; lipid IV(A) biosynthesis; lipid IV(A) from (3R)-3-hydroxytetradecanoyl-[acyl-carrier-protein] and UDP-N-acetyl-alpha-D-glucosamine: step 2/6.</text>
</comment>
<comment type="similarity">
    <text evidence="1">Belongs to the LpxC family.</text>
</comment>
<organism>
    <name type="scientific">Shewanella pealeana (strain ATCC 700345 / ANG-SQ1)</name>
    <dbReference type="NCBI Taxonomy" id="398579"/>
    <lineage>
        <taxon>Bacteria</taxon>
        <taxon>Pseudomonadati</taxon>
        <taxon>Pseudomonadota</taxon>
        <taxon>Gammaproteobacteria</taxon>
        <taxon>Alteromonadales</taxon>
        <taxon>Shewanellaceae</taxon>
        <taxon>Shewanella</taxon>
    </lineage>
</organism>
<evidence type="ECO:0000255" key="1">
    <source>
        <dbReference type="HAMAP-Rule" id="MF_00388"/>
    </source>
</evidence>
<feature type="chain" id="PRO_1000080229" description="UDP-3-O-acyl-N-acetylglucosamine deacetylase">
    <location>
        <begin position="1"/>
        <end position="306"/>
    </location>
</feature>
<feature type="active site" description="Proton donor" evidence="1">
    <location>
        <position position="265"/>
    </location>
</feature>
<feature type="binding site" evidence="1">
    <location>
        <position position="79"/>
    </location>
    <ligand>
        <name>Zn(2+)</name>
        <dbReference type="ChEBI" id="CHEBI:29105"/>
    </ligand>
</feature>
<feature type="binding site" evidence="1">
    <location>
        <position position="238"/>
    </location>
    <ligand>
        <name>Zn(2+)</name>
        <dbReference type="ChEBI" id="CHEBI:29105"/>
    </ligand>
</feature>
<feature type="binding site" evidence="1">
    <location>
        <position position="242"/>
    </location>
    <ligand>
        <name>Zn(2+)</name>
        <dbReference type="ChEBI" id="CHEBI:29105"/>
    </ligand>
</feature>
<accession>A8H979</accession>
<gene>
    <name evidence="1" type="primary">lpxC</name>
    <name type="ordered locus">Spea_3806</name>
</gene>
<reference key="1">
    <citation type="submission" date="2007-10" db="EMBL/GenBank/DDBJ databases">
        <title>Complete sequence of Shewanella pealeana ATCC 700345.</title>
        <authorList>
            <consortium name="US DOE Joint Genome Institute"/>
            <person name="Copeland A."/>
            <person name="Lucas S."/>
            <person name="Lapidus A."/>
            <person name="Barry K."/>
            <person name="Glavina del Rio T."/>
            <person name="Dalin E."/>
            <person name="Tice H."/>
            <person name="Pitluck S."/>
            <person name="Chertkov O."/>
            <person name="Brettin T."/>
            <person name="Bruce D."/>
            <person name="Detter J.C."/>
            <person name="Han C."/>
            <person name="Schmutz J."/>
            <person name="Larimer F."/>
            <person name="Land M."/>
            <person name="Hauser L."/>
            <person name="Kyrpides N."/>
            <person name="Kim E."/>
            <person name="Zhao J.-S.Z."/>
            <person name="Manno D."/>
            <person name="Hawari J."/>
            <person name="Richardson P."/>
        </authorList>
    </citation>
    <scope>NUCLEOTIDE SEQUENCE [LARGE SCALE GENOMIC DNA]</scope>
    <source>
        <strain>ATCC 700345 / ANG-SQ1</strain>
    </source>
</reference>
<name>LPXC_SHEPA</name>
<protein>
    <recommendedName>
        <fullName evidence="1">UDP-3-O-acyl-N-acetylglucosamine deacetylase</fullName>
        <shortName evidence="1">UDP-3-O-acyl-GlcNAc deacetylase</shortName>
        <ecNumber evidence="1">3.5.1.108</ecNumber>
    </recommendedName>
    <alternativeName>
        <fullName evidence="1">UDP-3-O-[R-3-hydroxymyristoyl]-N-acetylglucosamine deacetylase</fullName>
    </alternativeName>
</protein>